<name>D7L2_ANODA</name>
<gene>
    <name evidence="5" type="primary">D7L2</name>
</gene>
<accession>B6DDQ8</accession>
<comment type="function">
    <text evidence="1 4">Modulates blood feeding of female mosquitoes on vertebrate species by binding and sequestering different mediators involved in the host response, such as biogenic amines and eicosanoids (By similarity). Binds serotonin with high affinity (PubMed:35568118). Binds tryptamine, octopamine, dopamine and noradrenaline with low affinity (PubMed:35568118). Binds leukotriene C4, leukotriene D4, leukotriene E4 and U-46619, a stable analog of thromboxane A2 (PubMed:35568118). Does not bind leukotriene B4, adrenaline, histamine and ADP (PubMed:35568118). Inhibits platelet aggregation induced by low concentrations of collagen and arachidonic acid but not by ADP or adrenaline (PubMed:35568118).</text>
</comment>
<comment type="subcellular location">
    <subcellularLocation>
        <location evidence="1">Secreted</location>
    </subcellularLocation>
</comment>
<comment type="tissue specificity">
    <text evidence="3">Female salivary gland.</text>
</comment>
<comment type="domain">
    <text evidence="4">Lipids and biogenic amines bind independently through different binding pockets, with lipids binding to the N-terminal pocket and biogenic amines to the C-terminal pocket.</text>
</comment>
<comment type="similarity">
    <text evidence="6">Belongs to the PBP/GOBP family.</text>
</comment>
<dbReference type="EMBL" id="EU934268">
    <property type="protein sequence ID" value="ACI30046.1"/>
    <property type="molecule type" value="mRNA"/>
</dbReference>
<dbReference type="PDB" id="7TX8">
    <property type="method" value="X-ray"/>
    <property type="resolution" value="2.51 A"/>
    <property type="chains" value="A/B/C/D=21-317"/>
</dbReference>
<dbReference type="PDB" id="7U1N">
    <property type="method" value="X-ray"/>
    <property type="resolution" value="2.40 A"/>
    <property type="chains" value="A/B=21-317"/>
</dbReference>
<dbReference type="PDBsum" id="7TX8"/>
<dbReference type="PDBsum" id="7U1N"/>
<dbReference type="SMR" id="B6DDQ8"/>
<dbReference type="VEuPathDB" id="VectorBase:ADAC010080"/>
<dbReference type="VEuPathDB" id="VectorBase:ADAR2_009260"/>
<dbReference type="Proteomes" id="UP000000673">
    <property type="component" value="Unplaced"/>
</dbReference>
<dbReference type="GO" id="GO:0005615">
    <property type="term" value="C:extracellular space"/>
    <property type="evidence" value="ECO:0007669"/>
    <property type="project" value="TreeGrafter"/>
</dbReference>
<dbReference type="GO" id="GO:0005549">
    <property type="term" value="F:odorant binding"/>
    <property type="evidence" value="ECO:0007669"/>
    <property type="project" value="InterPro"/>
</dbReference>
<dbReference type="GO" id="GO:0090729">
    <property type="term" value="F:toxin activity"/>
    <property type="evidence" value="ECO:0007669"/>
    <property type="project" value="UniProtKB-KW"/>
</dbReference>
<dbReference type="GO" id="GO:0007608">
    <property type="term" value="P:sensory perception of smell"/>
    <property type="evidence" value="ECO:0007669"/>
    <property type="project" value="TreeGrafter"/>
</dbReference>
<dbReference type="CDD" id="cd23992">
    <property type="entry name" value="PBP_GOBP"/>
    <property type="match status" value="1"/>
</dbReference>
<dbReference type="Gene3D" id="1.10.238.20">
    <property type="entry name" value="Pheromone/general odorant binding protein domain"/>
    <property type="match status" value="2"/>
</dbReference>
<dbReference type="InterPro" id="IPR036728">
    <property type="entry name" value="PBP_GOBP_sf"/>
</dbReference>
<dbReference type="PANTHER" id="PTHR11857:SF43">
    <property type="entry name" value="GEO07291P1-RELATED"/>
    <property type="match status" value="1"/>
</dbReference>
<dbReference type="PANTHER" id="PTHR11857">
    <property type="entry name" value="ODORANT BINDING PROTEIN-RELATED"/>
    <property type="match status" value="1"/>
</dbReference>
<dbReference type="SUPFAM" id="SSF47565">
    <property type="entry name" value="Insect pheromone/odorant-binding proteins"/>
    <property type="match status" value="2"/>
</dbReference>
<organism evidence="8">
    <name type="scientific">Anopheles darlingi</name>
    <name type="common">Mosquito</name>
    <dbReference type="NCBI Taxonomy" id="43151"/>
    <lineage>
        <taxon>Eukaryota</taxon>
        <taxon>Metazoa</taxon>
        <taxon>Ecdysozoa</taxon>
        <taxon>Arthropoda</taxon>
        <taxon>Hexapoda</taxon>
        <taxon>Insecta</taxon>
        <taxon>Pterygota</taxon>
        <taxon>Neoptera</taxon>
        <taxon>Endopterygota</taxon>
        <taxon>Diptera</taxon>
        <taxon>Nematocera</taxon>
        <taxon>Culicoidea</taxon>
        <taxon>Culicidae</taxon>
        <taxon>Anophelinae</taxon>
        <taxon>Anopheles</taxon>
    </lineage>
</organism>
<proteinExistence type="evidence at protein level"/>
<sequence>MYKLLVALHLILCTVSHVKTRQRWTALTPEETLFIYTRCQEEHLPADNNSRKTYIENWHQWKLQPNDHVTQCYTKCVLEGLELYDGKQKKFRPGRVSSQHVAYQFLNGATADEVAKYKGAIDALEPASDSCEDLYMAYFPVHETFVNVTRKLYHGTVEGAARVYNSDPNLKRKNESLFTYCEKHVYGDQNREDMCRGRRYELTGSDELRNMIECVFRGLRYIKHGDINIDEIVRDFDHINRGDLEPRVRTILSDCRGIQPYDYYSCLINSDIREEFKLAFDYRDVRSADYAYIVKGNTYDAQKVIAEMNKVEKHVCG</sequence>
<reference evidence="8" key="1">
    <citation type="journal article" date="2009" name="BMC Genomics">
        <title>The salivary gland transcriptome of the neotropical malaria vector Anopheles darlingi reveals accelerated evolution of genes relevant to hematophagy.</title>
        <authorList>
            <person name="Calvo E."/>
            <person name="Pham V.M."/>
            <person name="Marinotti O."/>
            <person name="Andersen J.F."/>
            <person name="Ribeiro J.M.C."/>
        </authorList>
    </citation>
    <scope>NUCLEOTIDE SEQUENCE [LARGE SCALE MRNA]</scope>
    <scope>TISSUE SPECIFICITY</scope>
    <source>
        <tissue evidence="8">Salivary gland</tissue>
    </source>
</reference>
<reference evidence="9 10" key="2">
    <citation type="journal article" date="2022" name="Insect Biochem. Mol. Biol.">
        <title>Functional aspects of evolution in a cluster of salivary protein genes from mosquitoes.</title>
        <authorList>
            <person name="Alvarenga P.H."/>
            <person name="Dias D.R."/>
            <person name="Xu X."/>
            <person name="Francischetti I.M.B."/>
            <person name="Gittis A.G."/>
            <person name="Arp G."/>
            <person name="Garboczi D.N."/>
            <person name="Ribeiro J.M.C."/>
            <person name="Andersen J.F."/>
        </authorList>
    </citation>
    <scope>X-RAY CRYSTALLOGRAPHY (2.40 ANGSTROMS) OF 21-317 IN COMPLEX WITH SEROTONIN AND THROMBOXANE A2 ANALOG U-46619</scope>
    <scope>FUNCTION</scope>
    <scope>DOMAIN</scope>
    <scope>DISULFIDE BONDS</scope>
</reference>
<feature type="signal peptide" evidence="2">
    <location>
        <begin position="1"/>
        <end position="20"/>
    </location>
</feature>
<feature type="chain" id="PRO_5002841717" description="Long form salivary protein D7L2" evidence="2">
    <location>
        <begin position="21"/>
        <end position="317"/>
    </location>
</feature>
<feature type="binding site" evidence="7 9">
    <location>
        <position position="58"/>
    </location>
    <ligand>
        <name>thromboxane A2</name>
        <dbReference type="ChEBI" id="CHEBI:57445"/>
    </ligand>
</feature>
<feature type="binding site" evidence="7 9">
    <location>
        <position position="73"/>
    </location>
    <ligand>
        <name>thromboxane A2</name>
        <dbReference type="ChEBI" id="CHEBI:57445"/>
    </ligand>
</feature>
<feature type="binding site" evidence="4 9">
    <location>
        <position position="182"/>
    </location>
    <ligand>
        <name>serotonin</name>
        <dbReference type="ChEBI" id="CHEBI:350546"/>
    </ligand>
</feature>
<feature type="binding site" evidence="4 9">
    <location>
        <position position="264"/>
    </location>
    <ligand>
        <name>serotonin</name>
        <dbReference type="ChEBI" id="CHEBI:350546"/>
    </ligand>
</feature>
<feature type="binding site" evidence="4 9">
    <location>
        <position position="281"/>
    </location>
    <ligand>
        <name>serotonin</name>
        <dbReference type="ChEBI" id="CHEBI:350546"/>
    </ligand>
</feature>
<feature type="binding site" evidence="4 9">
    <location>
        <position position="284"/>
    </location>
    <ligand>
        <name>serotonin</name>
        <dbReference type="ChEBI" id="CHEBI:350546"/>
    </ligand>
</feature>
<feature type="binding site" evidence="4 9">
    <location>
        <position position="308"/>
    </location>
    <ligand>
        <name>serotonin</name>
        <dbReference type="ChEBI" id="CHEBI:350546"/>
    </ligand>
</feature>
<feature type="disulfide bond" evidence="4 9 10">
    <location>
        <begin position="39"/>
        <end position="76"/>
    </location>
</feature>
<feature type="disulfide bond" evidence="4 9 10">
    <location>
        <begin position="72"/>
        <end position="131"/>
    </location>
</feature>
<feature type="disulfide bond" evidence="4 9 10">
    <location>
        <begin position="181"/>
        <end position="214"/>
    </location>
</feature>
<feature type="disulfide bond" evidence="4 9 10">
    <location>
        <begin position="195"/>
        <end position="316"/>
    </location>
</feature>
<feature type="disulfide bond" evidence="4 9 10">
    <location>
        <begin position="255"/>
        <end position="266"/>
    </location>
</feature>
<feature type="helix" evidence="12">
    <location>
        <begin position="29"/>
        <end position="43"/>
    </location>
</feature>
<feature type="strand" evidence="11">
    <location>
        <begin position="46"/>
        <end position="48"/>
    </location>
</feature>
<feature type="helix" evidence="12">
    <location>
        <begin position="51"/>
        <end position="59"/>
    </location>
</feature>
<feature type="helix" evidence="12">
    <location>
        <begin position="68"/>
        <end position="80"/>
    </location>
</feature>
<feature type="strand" evidence="12">
    <location>
        <begin position="83"/>
        <end position="85"/>
    </location>
</feature>
<feature type="turn" evidence="12">
    <location>
        <begin position="86"/>
        <end position="89"/>
    </location>
</feature>
<feature type="helix" evidence="12">
    <location>
        <begin position="93"/>
        <end position="101"/>
    </location>
</feature>
<feature type="helix" evidence="12">
    <location>
        <begin position="104"/>
        <end position="107"/>
    </location>
</feature>
<feature type="helix" evidence="12">
    <location>
        <begin position="111"/>
        <end position="122"/>
    </location>
</feature>
<feature type="helix" evidence="12">
    <location>
        <begin position="131"/>
        <end position="152"/>
    </location>
</feature>
<feature type="helix" evidence="12">
    <location>
        <begin position="157"/>
        <end position="166"/>
    </location>
</feature>
<feature type="helix" evidence="12">
    <location>
        <begin position="177"/>
        <end position="186"/>
    </location>
</feature>
<feature type="helix" evidence="12">
    <location>
        <begin position="191"/>
        <end position="198"/>
    </location>
</feature>
<feature type="helix" evidence="12">
    <location>
        <begin position="206"/>
        <end position="218"/>
    </location>
</feature>
<feature type="strand" evidence="12">
    <location>
        <begin position="221"/>
        <end position="223"/>
    </location>
</feature>
<feature type="helix" evidence="12">
    <location>
        <begin position="229"/>
        <end position="238"/>
    </location>
</feature>
<feature type="helix" evidence="12">
    <location>
        <begin position="242"/>
        <end position="244"/>
    </location>
</feature>
<feature type="helix" evidence="12">
    <location>
        <begin position="245"/>
        <end position="254"/>
    </location>
</feature>
<feature type="helix" evidence="12">
    <location>
        <begin position="260"/>
        <end position="268"/>
    </location>
</feature>
<feature type="helix" evidence="12">
    <location>
        <begin position="273"/>
        <end position="287"/>
    </location>
</feature>
<feature type="turn" evidence="12">
    <location>
        <begin position="290"/>
        <end position="296"/>
    </location>
</feature>
<feature type="helix" evidence="12">
    <location>
        <begin position="301"/>
        <end position="315"/>
    </location>
</feature>
<keyword id="KW-0002">3D-structure</keyword>
<keyword id="KW-1015">Disulfide bond</keyword>
<keyword id="KW-1199">Hemostasis impairing toxin</keyword>
<keyword id="KW-1201">Platelet aggregation inhibiting toxin</keyword>
<keyword id="KW-1185">Reference proteome</keyword>
<keyword id="KW-0964">Secreted</keyword>
<keyword id="KW-0732">Signal</keyword>
<keyword id="KW-0800">Toxin</keyword>
<evidence type="ECO:0000250" key="1">
    <source>
        <dbReference type="UniProtKB" id="Q0IF93"/>
    </source>
</evidence>
<evidence type="ECO:0000255" key="2"/>
<evidence type="ECO:0000269" key="3">
    <source>
    </source>
</evidence>
<evidence type="ECO:0000269" key="4">
    <source>
    </source>
</evidence>
<evidence type="ECO:0000303" key="5">
    <source>
    </source>
</evidence>
<evidence type="ECO:0000305" key="6"/>
<evidence type="ECO:0000305" key="7">
    <source>
    </source>
</evidence>
<evidence type="ECO:0000312" key="8">
    <source>
        <dbReference type="EMBL" id="ACI30046.1"/>
    </source>
</evidence>
<evidence type="ECO:0007744" key="9">
    <source>
        <dbReference type="PDB" id="7TX8"/>
    </source>
</evidence>
<evidence type="ECO:0007744" key="10">
    <source>
        <dbReference type="PDB" id="7U1N"/>
    </source>
</evidence>
<evidence type="ECO:0007829" key="11">
    <source>
        <dbReference type="PDB" id="7TX8"/>
    </source>
</evidence>
<evidence type="ECO:0007829" key="12">
    <source>
        <dbReference type="PDB" id="7U1N"/>
    </source>
</evidence>
<protein>
    <recommendedName>
        <fullName evidence="6">Long form salivary protein D7L2</fullName>
        <shortName evidence="5">AnDar-D7L2</shortName>
    </recommendedName>
</protein>